<keyword id="KW-0028">Amino-acid biosynthesis</keyword>
<keyword id="KW-0057">Aromatic amino acid biosynthesis</keyword>
<keyword id="KW-0456">Lyase</keyword>
<keyword id="KW-0822">Tryptophan biosynthesis</keyword>
<protein>
    <recommendedName>
        <fullName evidence="1">Tryptophan synthase alpha chain</fullName>
        <ecNumber evidence="1">4.2.1.20</ecNumber>
    </recommendedName>
</protein>
<evidence type="ECO:0000255" key="1">
    <source>
        <dbReference type="HAMAP-Rule" id="MF_00131"/>
    </source>
</evidence>
<name>TRPA_XANC8</name>
<proteinExistence type="inferred from homology"/>
<organism>
    <name type="scientific">Xanthomonas campestris pv. campestris (strain 8004)</name>
    <dbReference type="NCBI Taxonomy" id="314565"/>
    <lineage>
        <taxon>Bacteria</taxon>
        <taxon>Pseudomonadati</taxon>
        <taxon>Pseudomonadota</taxon>
        <taxon>Gammaproteobacteria</taxon>
        <taxon>Lysobacterales</taxon>
        <taxon>Lysobacteraceae</taxon>
        <taxon>Xanthomonas</taxon>
    </lineage>
</organism>
<reference key="1">
    <citation type="journal article" date="2005" name="Genome Res.">
        <title>Comparative and functional genomic analyses of the pathogenicity of phytopathogen Xanthomonas campestris pv. campestris.</title>
        <authorList>
            <person name="Qian W."/>
            <person name="Jia Y."/>
            <person name="Ren S.-X."/>
            <person name="He Y.-Q."/>
            <person name="Feng J.-X."/>
            <person name="Lu L.-F."/>
            <person name="Sun Q."/>
            <person name="Ying G."/>
            <person name="Tang D.-J."/>
            <person name="Tang H."/>
            <person name="Wu W."/>
            <person name="Hao P."/>
            <person name="Wang L."/>
            <person name="Jiang B.-L."/>
            <person name="Zeng S."/>
            <person name="Gu W.-Y."/>
            <person name="Lu G."/>
            <person name="Rong L."/>
            <person name="Tian Y."/>
            <person name="Yao Z."/>
            <person name="Fu G."/>
            <person name="Chen B."/>
            <person name="Fang R."/>
            <person name="Qiang B."/>
            <person name="Chen Z."/>
            <person name="Zhao G.-P."/>
            <person name="Tang J.-L."/>
            <person name="He C."/>
        </authorList>
    </citation>
    <scope>NUCLEOTIDE SEQUENCE [LARGE SCALE GENOMIC DNA]</scope>
    <source>
        <strain>8004</strain>
    </source>
</reference>
<gene>
    <name evidence="1" type="primary">trpA</name>
    <name type="ordered locus">XC_1577</name>
</gene>
<dbReference type="EC" id="4.2.1.20" evidence="1"/>
<dbReference type="EMBL" id="CP000050">
    <property type="protein sequence ID" value="AAY48643.1"/>
    <property type="molecule type" value="Genomic_DNA"/>
</dbReference>
<dbReference type="RefSeq" id="WP_011037671.1">
    <property type="nucleotide sequence ID" value="NZ_CP155948.1"/>
</dbReference>
<dbReference type="SMR" id="Q4UWD0"/>
<dbReference type="KEGG" id="xcb:XC_1577"/>
<dbReference type="HOGENOM" id="CLU_016734_0_4_6"/>
<dbReference type="UniPathway" id="UPA00035">
    <property type="reaction ID" value="UER00044"/>
</dbReference>
<dbReference type="Proteomes" id="UP000000420">
    <property type="component" value="Chromosome"/>
</dbReference>
<dbReference type="GO" id="GO:0005829">
    <property type="term" value="C:cytosol"/>
    <property type="evidence" value="ECO:0007669"/>
    <property type="project" value="TreeGrafter"/>
</dbReference>
<dbReference type="GO" id="GO:0004834">
    <property type="term" value="F:tryptophan synthase activity"/>
    <property type="evidence" value="ECO:0007669"/>
    <property type="project" value="UniProtKB-UniRule"/>
</dbReference>
<dbReference type="CDD" id="cd04724">
    <property type="entry name" value="Tryptophan_synthase_alpha"/>
    <property type="match status" value="1"/>
</dbReference>
<dbReference type="FunFam" id="3.20.20.70:FF:000037">
    <property type="entry name" value="Tryptophan synthase alpha chain"/>
    <property type="match status" value="1"/>
</dbReference>
<dbReference type="Gene3D" id="3.20.20.70">
    <property type="entry name" value="Aldolase class I"/>
    <property type="match status" value="1"/>
</dbReference>
<dbReference type="HAMAP" id="MF_00131">
    <property type="entry name" value="Trp_synth_alpha"/>
    <property type="match status" value="1"/>
</dbReference>
<dbReference type="InterPro" id="IPR013785">
    <property type="entry name" value="Aldolase_TIM"/>
</dbReference>
<dbReference type="InterPro" id="IPR011060">
    <property type="entry name" value="RibuloseP-bd_barrel"/>
</dbReference>
<dbReference type="InterPro" id="IPR018204">
    <property type="entry name" value="Trp_synthase_alpha_AS"/>
</dbReference>
<dbReference type="InterPro" id="IPR002028">
    <property type="entry name" value="Trp_synthase_suA"/>
</dbReference>
<dbReference type="NCBIfam" id="TIGR00262">
    <property type="entry name" value="trpA"/>
    <property type="match status" value="1"/>
</dbReference>
<dbReference type="PANTHER" id="PTHR43406:SF1">
    <property type="entry name" value="TRYPTOPHAN SYNTHASE ALPHA CHAIN, CHLOROPLASTIC"/>
    <property type="match status" value="1"/>
</dbReference>
<dbReference type="PANTHER" id="PTHR43406">
    <property type="entry name" value="TRYPTOPHAN SYNTHASE, ALPHA CHAIN"/>
    <property type="match status" value="1"/>
</dbReference>
<dbReference type="Pfam" id="PF00290">
    <property type="entry name" value="Trp_syntA"/>
    <property type="match status" value="1"/>
</dbReference>
<dbReference type="SUPFAM" id="SSF51366">
    <property type="entry name" value="Ribulose-phoshate binding barrel"/>
    <property type="match status" value="1"/>
</dbReference>
<dbReference type="PROSITE" id="PS00167">
    <property type="entry name" value="TRP_SYNTHASE_ALPHA"/>
    <property type="match status" value="1"/>
</dbReference>
<comment type="function">
    <text evidence="1">The alpha subunit is responsible for the aldol cleavage of indoleglycerol phosphate to indole and glyceraldehyde 3-phosphate.</text>
</comment>
<comment type="catalytic activity">
    <reaction evidence="1">
        <text>(1S,2R)-1-C-(indol-3-yl)glycerol 3-phosphate + L-serine = D-glyceraldehyde 3-phosphate + L-tryptophan + H2O</text>
        <dbReference type="Rhea" id="RHEA:10532"/>
        <dbReference type="ChEBI" id="CHEBI:15377"/>
        <dbReference type="ChEBI" id="CHEBI:33384"/>
        <dbReference type="ChEBI" id="CHEBI:57912"/>
        <dbReference type="ChEBI" id="CHEBI:58866"/>
        <dbReference type="ChEBI" id="CHEBI:59776"/>
        <dbReference type="EC" id="4.2.1.20"/>
    </reaction>
</comment>
<comment type="pathway">
    <text evidence="1">Amino-acid biosynthesis; L-tryptophan biosynthesis; L-tryptophan from chorismate: step 5/5.</text>
</comment>
<comment type="subunit">
    <text evidence="1">Tetramer of two alpha and two beta chains.</text>
</comment>
<comment type="similarity">
    <text evidence="1">Belongs to the TrpA family.</text>
</comment>
<feature type="chain" id="PRO_1000018308" description="Tryptophan synthase alpha chain">
    <location>
        <begin position="1"/>
        <end position="272"/>
    </location>
</feature>
<feature type="active site" description="Proton acceptor" evidence="1">
    <location>
        <position position="53"/>
    </location>
</feature>
<feature type="active site" description="Proton acceptor" evidence="1">
    <location>
        <position position="64"/>
    </location>
</feature>
<sequence length="272" mass="28396">MSRAPDRIAACFDALRHSGRKALIPFITAGDPSLEATVPVMHALVRAGANIIELGVPFSDPMADGPTIQRSSERALGRGAGLAYVIEAVQEFRREDATTPVVLMGYLNPIEIHGTRRFAETAVAAGIDGVLLVDLPPEEADETRAIFTEVGLALIALASPTTGEARLDMLCSTAQGYLYYVSFSGVTGAADRLDTHAASDRLRQLRARAGAPVVAGFGIKDAASAAAMAVDADGVVVGSALVAALADASDVRSARKRAEDFLQPLRQALDAG</sequence>
<accession>Q4UWD0</accession>